<keyword id="KW-0217">Developmental protein</keyword>
<keyword id="KW-0539">Nucleus</keyword>
<keyword id="KW-1185">Reference proteome</keyword>
<keyword id="KW-0678">Repressor</keyword>
<keyword id="KW-0804">Transcription</keyword>
<keyword id="KW-0805">Transcription regulation</keyword>
<organism>
    <name type="scientific">Mus musculus</name>
    <name type="common">Mouse</name>
    <dbReference type="NCBI Taxonomy" id="10090"/>
    <lineage>
        <taxon>Eukaryota</taxon>
        <taxon>Metazoa</taxon>
        <taxon>Chordata</taxon>
        <taxon>Craniata</taxon>
        <taxon>Vertebrata</taxon>
        <taxon>Euteleostomi</taxon>
        <taxon>Mammalia</taxon>
        <taxon>Eutheria</taxon>
        <taxon>Euarchontoglires</taxon>
        <taxon>Glires</taxon>
        <taxon>Rodentia</taxon>
        <taxon>Myomorpha</taxon>
        <taxon>Muroidea</taxon>
        <taxon>Muridae</taxon>
        <taxon>Murinae</taxon>
        <taxon>Mus</taxon>
        <taxon>Mus</taxon>
    </lineage>
</organism>
<dbReference type="EMBL" id="AB063284">
    <property type="protein sequence ID" value="BAB60891.1"/>
    <property type="molecule type" value="mRNA"/>
</dbReference>
<dbReference type="EMBL" id="AK041355">
    <property type="protein sequence ID" value="BAC30916.1"/>
    <property type="molecule type" value="mRNA"/>
</dbReference>
<dbReference type="EMBL" id="AK172430">
    <property type="protein sequence ID" value="BAE43004.1"/>
    <property type="molecule type" value="mRNA"/>
</dbReference>
<dbReference type="EMBL" id="CT573086">
    <property type="status" value="NOT_ANNOTATED_CDS"/>
    <property type="molecule type" value="Genomic_DNA"/>
</dbReference>
<dbReference type="EMBL" id="BC060291">
    <property type="protein sequence ID" value="AAH60291.1"/>
    <property type="molecule type" value="mRNA"/>
</dbReference>
<dbReference type="CCDS" id="CCDS28347.1"/>
<dbReference type="RefSeq" id="NP_573492.2">
    <property type="nucleotide sequence ID" value="NM_133229.2"/>
</dbReference>
<dbReference type="FunCoup" id="Q924S9">
    <property type="interactions" value="547"/>
</dbReference>
<dbReference type="STRING" id="10090.ENSMUSP00000023660"/>
<dbReference type="iPTMnet" id="Q924S9"/>
<dbReference type="PhosphoSitePlus" id="Q924S9"/>
<dbReference type="PaxDb" id="10090-ENSMUSP00000023660"/>
<dbReference type="Antibodypedia" id="23129">
    <property type="antibodies" value="15 antibodies from 8 providers"/>
</dbReference>
<dbReference type="DNASU" id="170765"/>
<dbReference type="Ensembl" id="ENSMUST00000023660.9">
    <property type="protein sequence ID" value="ENSMUSP00000023660.9"/>
    <property type="gene ID" value="ENSMUSG00000022941.9"/>
</dbReference>
<dbReference type="GeneID" id="170765"/>
<dbReference type="KEGG" id="mmu:170765"/>
<dbReference type="UCSC" id="uc008aaj.2">
    <property type="organism name" value="mouse"/>
</dbReference>
<dbReference type="AGR" id="MGI:2181192"/>
<dbReference type="CTD" id="53820"/>
<dbReference type="MGI" id="MGI:2181192">
    <property type="gene designation" value="Ripply3"/>
</dbReference>
<dbReference type="VEuPathDB" id="HostDB:ENSMUSG00000022941"/>
<dbReference type="eggNOG" id="ENOG502S482">
    <property type="taxonomic scope" value="Eukaryota"/>
</dbReference>
<dbReference type="GeneTree" id="ENSGT00730000111429"/>
<dbReference type="HOGENOM" id="CLU_127183_1_0_1"/>
<dbReference type="InParanoid" id="Q924S9"/>
<dbReference type="OMA" id="RADQHTF"/>
<dbReference type="OrthoDB" id="9905973at2759"/>
<dbReference type="PhylomeDB" id="Q924S9"/>
<dbReference type="TreeFam" id="TF336045"/>
<dbReference type="BioGRID-ORCS" id="170765">
    <property type="hits" value="2 hits in 78 CRISPR screens"/>
</dbReference>
<dbReference type="ChiTaRS" id="Ripply3">
    <property type="organism name" value="mouse"/>
</dbReference>
<dbReference type="PRO" id="PR:Q924S9"/>
<dbReference type="Proteomes" id="UP000000589">
    <property type="component" value="Chromosome 16"/>
</dbReference>
<dbReference type="RNAct" id="Q924S9">
    <property type="molecule type" value="protein"/>
</dbReference>
<dbReference type="Bgee" id="ENSMUSG00000022941">
    <property type="expression patterns" value="Expressed in interventricular septum and 153 other cell types or tissues"/>
</dbReference>
<dbReference type="GO" id="GO:0005634">
    <property type="term" value="C:nucleus"/>
    <property type="evidence" value="ECO:0000250"/>
    <property type="project" value="UniProtKB"/>
</dbReference>
<dbReference type="GO" id="GO:0008283">
    <property type="term" value="P:cell population proliferation"/>
    <property type="evidence" value="ECO:0000315"/>
    <property type="project" value="MGI"/>
</dbReference>
<dbReference type="GO" id="GO:0007507">
    <property type="term" value="P:heart development"/>
    <property type="evidence" value="ECO:0000315"/>
    <property type="project" value="UniProtKB"/>
</dbReference>
<dbReference type="GO" id="GO:0008285">
    <property type="term" value="P:negative regulation of cell population proliferation"/>
    <property type="evidence" value="ECO:0000315"/>
    <property type="project" value="MGI"/>
</dbReference>
<dbReference type="GO" id="GO:0000122">
    <property type="term" value="P:negative regulation of transcription by RNA polymerase II"/>
    <property type="evidence" value="ECO:0000314"/>
    <property type="project" value="UniProtKB"/>
</dbReference>
<dbReference type="GO" id="GO:0060037">
    <property type="term" value="P:pharyngeal system development"/>
    <property type="evidence" value="ECO:0000315"/>
    <property type="project" value="UniProtKB"/>
</dbReference>
<dbReference type="InterPro" id="IPR028127">
    <property type="entry name" value="Ripply_fam"/>
</dbReference>
<dbReference type="PANTHER" id="PTHR16770">
    <property type="entry name" value="PROTEIN RIPPLY-LIKE"/>
    <property type="match status" value="1"/>
</dbReference>
<dbReference type="PANTHER" id="PTHR16770:SF4">
    <property type="entry name" value="PROTEIN RIPPLY3"/>
    <property type="match status" value="1"/>
</dbReference>
<dbReference type="Pfam" id="PF14998">
    <property type="entry name" value="Ripply"/>
    <property type="match status" value="1"/>
</dbReference>
<name>DSCR6_MOUSE</name>
<gene>
    <name type="primary">Ripply3</name>
    <name type="synonym">Dscr6</name>
</gene>
<accession>Q924S9</accession>
<accession>B8JK62</accession>
<accession>Q8BYB3</accession>
<proteinExistence type="evidence at protein level"/>
<protein>
    <recommendedName>
        <fullName>Protein ripply3</fullName>
    </recommendedName>
    <alternativeName>
        <fullName>Down syndrome critical region protein 6</fullName>
    </alternativeName>
</protein>
<reference evidence="7" key="1">
    <citation type="submission" date="2001-06" db="EMBL/GenBank/DDBJ databases">
        <title>Isolation of Dscr6 cDNA, mouse homolog of Human Down syndrome critical region gene 6, DSCR6.</title>
        <authorList>
            <person name="Shibuya K."/>
            <person name="Kudoh J."/>
            <person name="Takahashi M."/>
            <person name="Minoshima S."/>
            <person name="Shimizu N."/>
        </authorList>
    </citation>
    <scope>NUCLEOTIDE SEQUENCE [MRNA]</scope>
    <source>
        <tissue evidence="7">Embryo</tissue>
    </source>
</reference>
<reference evidence="8" key="2">
    <citation type="journal article" date="2005" name="Science">
        <title>The transcriptional landscape of the mammalian genome.</title>
        <authorList>
            <person name="Carninci P."/>
            <person name="Kasukawa T."/>
            <person name="Katayama S."/>
            <person name="Gough J."/>
            <person name="Frith M.C."/>
            <person name="Maeda N."/>
            <person name="Oyama R."/>
            <person name="Ravasi T."/>
            <person name="Lenhard B."/>
            <person name="Wells C."/>
            <person name="Kodzius R."/>
            <person name="Shimokawa K."/>
            <person name="Bajic V.B."/>
            <person name="Brenner S.E."/>
            <person name="Batalov S."/>
            <person name="Forrest A.R."/>
            <person name="Zavolan M."/>
            <person name="Davis M.J."/>
            <person name="Wilming L.G."/>
            <person name="Aidinis V."/>
            <person name="Allen J.E."/>
            <person name="Ambesi-Impiombato A."/>
            <person name="Apweiler R."/>
            <person name="Aturaliya R.N."/>
            <person name="Bailey T.L."/>
            <person name="Bansal M."/>
            <person name="Baxter L."/>
            <person name="Beisel K.W."/>
            <person name="Bersano T."/>
            <person name="Bono H."/>
            <person name="Chalk A.M."/>
            <person name="Chiu K.P."/>
            <person name="Choudhary V."/>
            <person name="Christoffels A."/>
            <person name="Clutterbuck D.R."/>
            <person name="Crowe M.L."/>
            <person name="Dalla E."/>
            <person name="Dalrymple B.P."/>
            <person name="de Bono B."/>
            <person name="Della Gatta G."/>
            <person name="di Bernardo D."/>
            <person name="Down T."/>
            <person name="Engstrom P."/>
            <person name="Fagiolini M."/>
            <person name="Faulkner G."/>
            <person name="Fletcher C.F."/>
            <person name="Fukushima T."/>
            <person name="Furuno M."/>
            <person name="Futaki S."/>
            <person name="Gariboldi M."/>
            <person name="Georgii-Hemming P."/>
            <person name="Gingeras T.R."/>
            <person name="Gojobori T."/>
            <person name="Green R.E."/>
            <person name="Gustincich S."/>
            <person name="Harbers M."/>
            <person name="Hayashi Y."/>
            <person name="Hensch T.K."/>
            <person name="Hirokawa N."/>
            <person name="Hill D."/>
            <person name="Huminiecki L."/>
            <person name="Iacono M."/>
            <person name="Ikeo K."/>
            <person name="Iwama A."/>
            <person name="Ishikawa T."/>
            <person name="Jakt M."/>
            <person name="Kanapin A."/>
            <person name="Katoh M."/>
            <person name="Kawasawa Y."/>
            <person name="Kelso J."/>
            <person name="Kitamura H."/>
            <person name="Kitano H."/>
            <person name="Kollias G."/>
            <person name="Krishnan S.P."/>
            <person name="Kruger A."/>
            <person name="Kummerfeld S.K."/>
            <person name="Kurochkin I.V."/>
            <person name="Lareau L.F."/>
            <person name="Lazarevic D."/>
            <person name="Lipovich L."/>
            <person name="Liu J."/>
            <person name="Liuni S."/>
            <person name="McWilliam S."/>
            <person name="Madan Babu M."/>
            <person name="Madera M."/>
            <person name="Marchionni L."/>
            <person name="Matsuda H."/>
            <person name="Matsuzawa S."/>
            <person name="Miki H."/>
            <person name="Mignone F."/>
            <person name="Miyake S."/>
            <person name="Morris K."/>
            <person name="Mottagui-Tabar S."/>
            <person name="Mulder N."/>
            <person name="Nakano N."/>
            <person name="Nakauchi H."/>
            <person name="Ng P."/>
            <person name="Nilsson R."/>
            <person name="Nishiguchi S."/>
            <person name="Nishikawa S."/>
            <person name="Nori F."/>
            <person name="Ohara O."/>
            <person name="Okazaki Y."/>
            <person name="Orlando V."/>
            <person name="Pang K.C."/>
            <person name="Pavan W.J."/>
            <person name="Pavesi G."/>
            <person name="Pesole G."/>
            <person name="Petrovsky N."/>
            <person name="Piazza S."/>
            <person name="Reed J."/>
            <person name="Reid J.F."/>
            <person name="Ring B.Z."/>
            <person name="Ringwald M."/>
            <person name="Rost B."/>
            <person name="Ruan Y."/>
            <person name="Salzberg S.L."/>
            <person name="Sandelin A."/>
            <person name="Schneider C."/>
            <person name="Schoenbach C."/>
            <person name="Sekiguchi K."/>
            <person name="Semple C.A."/>
            <person name="Seno S."/>
            <person name="Sessa L."/>
            <person name="Sheng Y."/>
            <person name="Shibata Y."/>
            <person name="Shimada H."/>
            <person name="Shimada K."/>
            <person name="Silva D."/>
            <person name="Sinclair B."/>
            <person name="Sperling S."/>
            <person name="Stupka E."/>
            <person name="Sugiura K."/>
            <person name="Sultana R."/>
            <person name="Takenaka Y."/>
            <person name="Taki K."/>
            <person name="Tammoja K."/>
            <person name="Tan S.L."/>
            <person name="Tang S."/>
            <person name="Taylor M.S."/>
            <person name="Tegner J."/>
            <person name="Teichmann S.A."/>
            <person name="Ueda H.R."/>
            <person name="van Nimwegen E."/>
            <person name="Verardo R."/>
            <person name="Wei C.L."/>
            <person name="Yagi K."/>
            <person name="Yamanishi H."/>
            <person name="Zabarovsky E."/>
            <person name="Zhu S."/>
            <person name="Zimmer A."/>
            <person name="Hide W."/>
            <person name="Bult C."/>
            <person name="Grimmond S.M."/>
            <person name="Teasdale R.D."/>
            <person name="Liu E.T."/>
            <person name="Brusic V."/>
            <person name="Quackenbush J."/>
            <person name="Wahlestedt C."/>
            <person name="Mattick J.S."/>
            <person name="Hume D.A."/>
            <person name="Kai C."/>
            <person name="Sasaki D."/>
            <person name="Tomaru Y."/>
            <person name="Fukuda S."/>
            <person name="Kanamori-Katayama M."/>
            <person name="Suzuki M."/>
            <person name="Aoki J."/>
            <person name="Arakawa T."/>
            <person name="Iida J."/>
            <person name="Imamura K."/>
            <person name="Itoh M."/>
            <person name="Kato T."/>
            <person name="Kawaji H."/>
            <person name="Kawagashira N."/>
            <person name="Kawashima T."/>
            <person name="Kojima M."/>
            <person name="Kondo S."/>
            <person name="Konno H."/>
            <person name="Nakano K."/>
            <person name="Ninomiya N."/>
            <person name="Nishio T."/>
            <person name="Okada M."/>
            <person name="Plessy C."/>
            <person name="Shibata K."/>
            <person name="Shiraki T."/>
            <person name="Suzuki S."/>
            <person name="Tagami M."/>
            <person name="Waki K."/>
            <person name="Watahiki A."/>
            <person name="Okamura-Oho Y."/>
            <person name="Suzuki H."/>
            <person name="Kawai J."/>
            <person name="Hayashizaki Y."/>
        </authorList>
    </citation>
    <scope>NUCLEOTIDE SEQUENCE [LARGE SCALE MRNA]</scope>
    <source>
        <strain evidence="8">C57BL/6J</strain>
        <strain evidence="9">NOD</strain>
        <tissue evidence="9">Spleen</tissue>
        <tissue evidence="8">Thymus</tissue>
    </source>
</reference>
<reference key="3">
    <citation type="journal article" date="2009" name="PLoS Biol.">
        <title>Lineage-specific biology revealed by a finished genome assembly of the mouse.</title>
        <authorList>
            <person name="Church D.M."/>
            <person name="Goodstadt L."/>
            <person name="Hillier L.W."/>
            <person name="Zody M.C."/>
            <person name="Goldstein S."/>
            <person name="She X."/>
            <person name="Bult C.J."/>
            <person name="Agarwala R."/>
            <person name="Cherry J.L."/>
            <person name="DiCuccio M."/>
            <person name="Hlavina W."/>
            <person name="Kapustin Y."/>
            <person name="Meric P."/>
            <person name="Maglott D."/>
            <person name="Birtle Z."/>
            <person name="Marques A.C."/>
            <person name="Graves T."/>
            <person name="Zhou S."/>
            <person name="Teague B."/>
            <person name="Potamousis K."/>
            <person name="Churas C."/>
            <person name="Place M."/>
            <person name="Herschleb J."/>
            <person name="Runnheim R."/>
            <person name="Forrest D."/>
            <person name="Amos-Landgraf J."/>
            <person name="Schwartz D.C."/>
            <person name="Cheng Z."/>
            <person name="Lindblad-Toh K."/>
            <person name="Eichler E.E."/>
            <person name="Ponting C.P."/>
        </authorList>
    </citation>
    <scope>NUCLEOTIDE SEQUENCE [LARGE SCALE GENOMIC DNA]</scope>
    <source>
        <strain>C57BL/6J</strain>
    </source>
</reference>
<reference evidence="6" key="4">
    <citation type="journal article" date="2004" name="Genome Res.">
        <title>The status, quality, and expansion of the NIH full-length cDNA project: the Mammalian Gene Collection (MGC).</title>
        <authorList>
            <consortium name="The MGC Project Team"/>
        </authorList>
    </citation>
    <scope>NUCLEOTIDE SEQUENCE [LARGE SCALE MRNA]</scope>
    <source>
        <tissue evidence="6">Jaw</tissue>
        <tissue evidence="6">Limb</tissue>
    </source>
</reference>
<reference evidence="5" key="5">
    <citation type="journal article" date="2005" name="Dev. Cell">
        <title>Groucho-associated transcriptional repressor ripply1 is required for proper transition from the presomitic mesoderm to somites.</title>
        <authorList>
            <person name="Kawamura A."/>
            <person name="Koshida S."/>
            <person name="Hijikata H."/>
            <person name="Ohbayashi A."/>
            <person name="Kondoh H."/>
            <person name="Takada S."/>
        </authorList>
    </citation>
    <scope>IDENTIFICATION AS RIPPLY3</scope>
</reference>
<reference key="6">
    <citation type="journal article" date="2011" name="Development">
        <title>Ripply3, a Tbx1 repressor, is required for development of the pharyngeal apparatus and its derivatives in mice.</title>
        <authorList>
            <person name="Okubo T."/>
            <person name="Kawamura A."/>
            <person name="Takahashi J."/>
            <person name="Yagi H."/>
            <person name="Morishima M."/>
            <person name="Matsuoka R."/>
            <person name="Takada S."/>
        </authorList>
    </citation>
    <scope>FUNCTION</scope>
    <scope>INTERACTION WITH TBX1</scope>
    <scope>DISRUPTION PHENOTYPE</scope>
    <scope>DEVELOPMENTAL STAGE</scope>
</reference>
<sequence length="152" mass="16965">MRPEAAGVREARGRLCHCPGDDPGRLPLPRGPESSIPAPWRPWMSPPPGDAELTRTERPCESWGDQHTSGSKGAFGFQHPVRLYLPVSKRQEYLQSSGEKVLASFPVQATIHFYNDDSESGSEEEQEEEAQPNHLQCLEAEVRDSAQEERAE</sequence>
<feature type="chain" id="PRO_0000307763" description="Protein ripply3">
    <location>
        <begin position="1"/>
        <end position="152"/>
    </location>
</feature>
<feature type="region of interest" description="Disordered" evidence="3">
    <location>
        <begin position="1"/>
        <end position="76"/>
    </location>
</feature>
<feature type="region of interest" description="Ripply homology domain" evidence="2">
    <location>
        <begin position="79"/>
        <end position="114"/>
    </location>
</feature>
<feature type="region of interest" description="Disordered" evidence="3">
    <location>
        <begin position="113"/>
        <end position="152"/>
    </location>
</feature>
<feature type="short sequence motif" description="WRPW motif" evidence="2">
    <location>
        <begin position="40"/>
        <end position="43"/>
    </location>
</feature>
<feature type="compositionally biased region" description="Basic and acidic residues" evidence="3">
    <location>
        <begin position="1"/>
        <end position="24"/>
    </location>
</feature>
<feature type="compositionally biased region" description="Acidic residues" evidence="3">
    <location>
        <begin position="116"/>
        <end position="130"/>
    </location>
</feature>
<feature type="compositionally biased region" description="Basic and acidic residues" evidence="3">
    <location>
        <begin position="140"/>
        <end position="152"/>
    </location>
</feature>
<feature type="sequence conflict" description="In Ref. 1; BAB60891, 2; BAE43004 and 4; AAH60291." evidence="5" ref="1 2 4">
    <original>S</original>
    <variation>A</variation>
    <location>
        <position position="71"/>
    </location>
</feature>
<evidence type="ECO:0000250" key="1">
    <source>
        <dbReference type="UniProtKB" id="Q2WG80"/>
    </source>
</evidence>
<evidence type="ECO:0000255" key="2"/>
<evidence type="ECO:0000256" key="3">
    <source>
        <dbReference type="SAM" id="MobiDB-lite"/>
    </source>
</evidence>
<evidence type="ECO:0000269" key="4">
    <source>
    </source>
</evidence>
<evidence type="ECO:0000305" key="5"/>
<evidence type="ECO:0000312" key="6">
    <source>
        <dbReference type="EMBL" id="AAH60291.1"/>
    </source>
</evidence>
<evidence type="ECO:0000312" key="7">
    <source>
        <dbReference type="EMBL" id="BAB60891.1"/>
    </source>
</evidence>
<evidence type="ECO:0000312" key="8">
    <source>
        <dbReference type="EMBL" id="BAC30916.1"/>
    </source>
</evidence>
<evidence type="ECO:0000312" key="9">
    <source>
        <dbReference type="EMBL" id="BAE43004.1"/>
    </source>
</evidence>
<comment type="function">
    <text evidence="4">Acts as a transcriptional corepressor. Negative regulator of the transcriptional activity of TBX1. Plays a role in the development of the pharyngeal apparatus and derivatives.</text>
</comment>
<comment type="subunit">
    <text evidence="4">Interacts with TBX1.</text>
</comment>
<comment type="subcellular location">
    <subcellularLocation>
        <location evidence="1">Nucleus</location>
    </subcellularLocation>
</comment>
<comment type="developmental stage">
    <text evidence="4">Expressed in the endoderm and ectoderm cells of the caudal pharyngeal region at 8.5 dpc.</text>
</comment>
<comment type="domain">
    <text>The Ripply homology domain and the WRPW motif are both necessary for its transcriptional corepressor activity on the transcription activator TBX1.</text>
</comment>
<comment type="domain">
    <text evidence="1">The WRPW motif is required for binding to tle/groucho proteins.</text>
</comment>
<comment type="disruption phenotype">
    <text evidence="4">Mice are viable, fertile and morphologically normal. Show abnormal development of pharyngeal derivatives, including ectopic formation of the thymus and the parathyroid gland, as well as cardiovascular malformation.</text>
</comment>
<comment type="similarity">
    <text evidence="5">Belongs to the ripply family.</text>
</comment>